<keyword id="KW-0539">Nucleus</keyword>
<keyword id="KW-1185">Reference proteome</keyword>
<keyword id="KW-0687">Ribonucleoprotein</keyword>
<keyword id="KW-0690">Ribosome biogenesis</keyword>
<keyword id="KW-0698">rRNA processing</keyword>
<protein>
    <recommendedName>
        <fullName>Nucleolar protein 16</fullName>
    </recommendedName>
</protein>
<comment type="function">
    <text evidence="1">Involved in the biogenesis of the 60S ribosomal subunit.</text>
</comment>
<comment type="subunit">
    <text evidence="1">Component of the pre-66S ribosomal particle.</text>
</comment>
<comment type="subcellular location">
    <subcellularLocation>
        <location evidence="1">Nucleus</location>
        <location evidence="1">Nucleolus</location>
    </subcellularLocation>
</comment>
<comment type="similarity">
    <text evidence="3">Belongs to the NOP16 family.</text>
</comment>
<evidence type="ECO:0000250" key="1"/>
<evidence type="ECO:0000256" key="2">
    <source>
        <dbReference type="SAM" id="MobiDB-lite"/>
    </source>
</evidence>
<evidence type="ECO:0000305" key="3"/>
<accession>A6RC73</accession>
<sequence>MGRILQKKKNRSGAPRVKQKSNRLKNGNKKINVLGNAIIAQNWDKKLTLTQNYRRLGLASQLNAPTGGAENKPDDPSNGRQEADSLHLLPSLASVKMIKPAEMRVERDPATGKILRVIHPENETEEVEIAGRKHRRANPLEDPLNEVGDDVLNNTALRIHGSSTSSAVVQALERQAALEEEALKKKQPRQQSKREEEWLERLVAKHGDNIIAMVRDTRLNPMQQTEGDIKRRLKKWREKRGNV</sequence>
<reference key="1">
    <citation type="journal article" date="2009" name="Genome Res.">
        <title>Comparative genomic analyses of the human fungal pathogens Coccidioides and their relatives.</title>
        <authorList>
            <person name="Sharpton T.J."/>
            <person name="Stajich J.E."/>
            <person name="Rounsley S.D."/>
            <person name="Gardner M.J."/>
            <person name="Wortman J.R."/>
            <person name="Jordar V.S."/>
            <person name="Maiti R."/>
            <person name="Kodira C.D."/>
            <person name="Neafsey D.E."/>
            <person name="Zeng Q."/>
            <person name="Hung C.-Y."/>
            <person name="McMahan C."/>
            <person name="Muszewska A."/>
            <person name="Grynberg M."/>
            <person name="Mandel M.A."/>
            <person name="Kellner E.M."/>
            <person name="Barker B.M."/>
            <person name="Galgiani J.N."/>
            <person name="Orbach M.J."/>
            <person name="Kirkland T.N."/>
            <person name="Cole G.T."/>
            <person name="Henn M.R."/>
            <person name="Birren B.W."/>
            <person name="Taylor J.W."/>
        </authorList>
    </citation>
    <scope>NUCLEOTIDE SEQUENCE [LARGE SCALE GENOMIC DNA]</scope>
    <source>
        <strain>NAm1 / WU24</strain>
    </source>
</reference>
<feature type="chain" id="PRO_0000320364" description="Nucleolar protein 16">
    <location>
        <begin position="1"/>
        <end position="243"/>
    </location>
</feature>
<feature type="region of interest" description="Disordered" evidence="2">
    <location>
        <begin position="1"/>
        <end position="22"/>
    </location>
</feature>
<feature type="region of interest" description="Disordered" evidence="2">
    <location>
        <begin position="60"/>
        <end position="82"/>
    </location>
</feature>
<feature type="compositionally biased region" description="Basic and acidic residues" evidence="2">
    <location>
        <begin position="71"/>
        <end position="82"/>
    </location>
</feature>
<name>NOP16_AJECN</name>
<gene>
    <name type="primary">NOP16</name>
    <name type="ORF">HCAG_07231</name>
</gene>
<proteinExistence type="inferred from homology"/>
<organism>
    <name type="scientific">Ajellomyces capsulatus (strain NAm1 / WU24)</name>
    <name type="common">Darling's disease fungus</name>
    <name type="synonym">Histoplasma capsulatum</name>
    <dbReference type="NCBI Taxonomy" id="2059318"/>
    <lineage>
        <taxon>Eukaryota</taxon>
        <taxon>Fungi</taxon>
        <taxon>Dikarya</taxon>
        <taxon>Ascomycota</taxon>
        <taxon>Pezizomycotina</taxon>
        <taxon>Eurotiomycetes</taxon>
        <taxon>Eurotiomycetidae</taxon>
        <taxon>Onygenales</taxon>
        <taxon>Ajellomycetaceae</taxon>
        <taxon>Histoplasma</taxon>
    </lineage>
</organism>
<dbReference type="EMBL" id="CH476662">
    <property type="protein sequence ID" value="EDN10770.1"/>
    <property type="molecule type" value="Genomic_DNA"/>
</dbReference>
<dbReference type="SMR" id="A6RC73"/>
<dbReference type="STRING" id="339724.A6RC73"/>
<dbReference type="KEGG" id="aje:HCAG_07231"/>
<dbReference type="VEuPathDB" id="FungiDB:HCAG_07231"/>
<dbReference type="HOGENOM" id="CLU_078857_0_0_1"/>
<dbReference type="OMA" id="MQQTEAD"/>
<dbReference type="OrthoDB" id="6430at299071"/>
<dbReference type="Proteomes" id="UP000009297">
    <property type="component" value="Unassembled WGS sequence"/>
</dbReference>
<dbReference type="GO" id="GO:0005730">
    <property type="term" value="C:nucleolus"/>
    <property type="evidence" value="ECO:0007669"/>
    <property type="project" value="UniProtKB-SubCell"/>
</dbReference>
<dbReference type="GO" id="GO:1990904">
    <property type="term" value="C:ribonucleoprotein complex"/>
    <property type="evidence" value="ECO:0007669"/>
    <property type="project" value="UniProtKB-KW"/>
</dbReference>
<dbReference type="GO" id="GO:0042273">
    <property type="term" value="P:ribosomal large subunit biogenesis"/>
    <property type="evidence" value="ECO:0007669"/>
    <property type="project" value="TreeGrafter"/>
</dbReference>
<dbReference type="GO" id="GO:0006364">
    <property type="term" value="P:rRNA processing"/>
    <property type="evidence" value="ECO:0007669"/>
    <property type="project" value="UniProtKB-KW"/>
</dbReference>
<dbReference type="InterPro" id="IPR019002">
    <property type="entry name" value="Ribosome_biogenesis_Nop16"/>
</dbReference>
<dbReference type="PANTHER" id="PTHR13243">
    <property type="entry name" value="HSPC111 PROTEIN-RELATED"/>
    <property type="match status" value="1"/>
</dbReference>
<dbReference type="PANTHER" id="PTHR13243:SF1">
    <property type="entry name" value="NUCLEOLAR PROTEIN 16"/>
    <property type="match status" value="1"/>
</dbReference>
<dbReference type="Pfam" id="PF09420">
    <property type="entry name" value="Nop16"/>
    <property type="match status" value="1"/>
</dbReference>